<name>RPOA_RICFE</name>
<protein>
    <recommendedName>
        <fullName evidence="1">DNA-directed RNA polymerase subunit alpha</fullName>
        <shortName evidence="1">RNAP subunit alpha</shortName>
        <ecNumber evidence="1">2.7.7.6</ecNumber>
    </recommendedName>
    <alternativeName>
        <fullName evidence="1">RNA polymerase subunit alpha</fullName>
    </alternativeName>
    <alternativeName>
        <fullName evidence="1">Transcriptase subunit alpha</fullName>
    </alternativeName>
</protein>
<comment type="function">
    <text evidence="1">DNA-dependent RNA polymerase catalyzes the transcription of DNA into RNA using the four ribonucleoside triphosphates as substrates.</text>
</comment>
<comment type="catalytic activity">
    <reaction evidence="1">
        <text>RNA(n) + a ribonucleoside 5'-triphosphate = RNA(n+1) + diphosphate</text>
        <dbReference type="Rhea" id="RHEA:21248"/>
        <dbReference type="Rhea" id="RHEA-COMP:14527"/>
        <dbReference type="Rhea" id="RHEA-COMP:17342"/>
        <dbReference type="ChEBI" id="CHEBI:33019"/>
        <dbReference type="ChEBI" id="CHEBI:61557"/>
        <dbReference type="ChEBI" id="CHEBI:140395"/>
        <dbReference type="EC" id="2.7.7.6"/>
    </reaction>
</comment>
<comment type="subunit">
    <text evidence="1">Homodimer. The RNAP catalytic core consists of 2 alpha, 1 beta, 1 beta' and 1 omega subunit. When a sigma factor is associated with the core the holoenzyme is formed, which can initiate transcription.</text>
</comment>
<comment type="domain">
    <text evidence="1">The N-terminal domain is essential for RNAP assembly and basal transcription, whereas the C-terminal domain is involved in interaction with transcriptional regulators and with upstream promoter elements.</text>
</comment>
<comment type="similarity">
    <text evidence="1">Belongs to the RNA polymerase alpha chain family.</text>
</comment>
<gene>
    <name evidence="1" type="primary">rpoA</name>
    <name type="ordered locus">RF_0302</name>
</gene>
<proteinExistence type="inferred from homology"/>
<organism>
    <name type="scientific">Rickettsia felis (strain ATCC VR-1525 / URRWXCal2)</name>
    <name type="common">Rickettsia azadi</name>
    <dbReference type="NCBI Taxonomy" id="315456"/>
    <lineage>
        <taxon>Bacteria</taxon>
        <taxon>Pseudomonadati</taxon>
        <taxon>Pseudomonadota</taxon>
        <taxon>Alphaproteobacteria</taxon>
        <taxon>Rickettsiales</taxon>
        <taxon>Rickettsiaceae</taxon>
        <taxon>Rickettsieae</taxon>
        <taxon>Rickettsia</taxon>
        <taxon>spotted fever group</taxon>
    </lineage>
</organism>
<keyword id="KW-0240">DNA-directed RNA polymerase</keyword>
<keyword id="KW-0548">Nucleotidyltransferase</keyword>
<keyword id="KW-0804">Transcription</keyword>
<keyword id="KW-0808">Transferase</keyword>
<accession>Q4UMQ5</accession>
<sequence length="340" mass="38288">MLSLSKNWNTLIKPNKVAYENFPETNNKAKIVVEPLERGFGLTLGNAMRRVLLSSLQGAAITSIKIPAIEHEFSSIPGVKEDVSEVILNIKGIEVKMHVAEKRIMKLKATGPCVITAGMIETGHDVEILNPDHVICNLAKNKQLEMELTCKVGKGYVLSTNSYEDNLPIGEIAIDALFNPVKSVTYKVENTRVGQVTDYDKLIMFVETNGDLLPEMAVGLAARILQEQLQLFISFEEQEEDKQVKTDALPFSPYLLKRVDELELSVRSANCLKNDNIIYIGDLVKRTESDMLRTPNFGRKSLNEIKEILAKFNLRFGMDVPDWPPENIQELSNRYEDSYN</sequence>
<dbReference type="EC" id="2.7.7.6" evidence="1"/>
<dbReference type="EMBL" id="CP000053">
    <property type="protein sequence ID" value="AAY61153.1"/>
    <property type="molecule type" value="Genomic_DNA"/>
</dbReference>
<dbReference type="SMR" id="Q4UMQ5"/>
<dbReference type="STRING" id="315456.RF_0302"/>
<dbReference type="KEGG" id="rfe:RF_0302"/>
<dbReference type="eggNOG" id="COG0202">
    <property type="taxonomic scope" value="Bacteria"/>
</dbReference>
<dbReference type="HOGENOM" id="CLU_053084_0_0_5"/>
<dbReference type="OrthoDB" id="9805706at2"/>
<dbReference type="Proteomes" id="UP000008548">
    <property type="component" value="Chromosome"/>
</dbReference>
<dbReference type="GO" id="GO:0005737">
    <property type="term" value="C:cytoplasm"/>
    <property type="evidence" value="ECO:0007669"/>
    <property type="project" value="UniProtKB-ARBA"/>
</dbReference>
<dbReference type="GO" id="GO:0000428">
    <property type="term" value="C:DNA-directed RNA polymerase complex"/>
    <property type="evidence" value="ECO:0007669"/>
    <property type="project" value="UniProtKB-KW"/>
</dbReference>
<dbReference type="GO" id="GO:0003677">
    <property type="term" value="F:DNA binding"/>
    <property type="evidence" value="ECO:0007669"/>
    <property type="project" value="UniProtKB-UniRule"/>
</dbReference>
<dbReference type="GO" id="GO:0003899">
    <property type="term" value="F:DNA-directed RNA polymerase activity"/>
    <property type="evidence" value="ECO:0007669"/>
    <property type="project" value="UniProtKB-UniRule"/>
</dbReference>
<dbReference type="GO" id="GO:0046983">
    <property type="term" value="F:protein dimerization activity"/>
    <property type="evidence" value="ECO:0007669"/>
    <property type="project" value="InterPro"/>
</dbReference>
<dbReference type="GO" id="GO:0006351">
    <property type="term" value="P:DNA-templated transcription"/>
    <property type="evidence" value="ECO:0007669"/>
    <property type="project" value="UniProtKB-UniRule"/>
</dbReference>
<dbReference type="CDD" id="cd06928">
    <property type="entry name" value="RNAP_alpha_NTD"/>
    <property type="match status" value="1"/>
</dbReference>
<dbReference type="FunFam" id="1.10.150.20:FF:000001">
    <property type="entry name" value="DNA-directed RNA polymerase subunit alpha"/>
    <property type="match status" value="1"/>
</dbReference>
<dbReference type="FunFam" id="2.170.120.12:FF:000001">
    <property type="entry name" value="DNA-directed RNA polymerase subunit alpha"/>
    <property type="match status" value="1"/>
</dbReference>
<dbReference type="Gene3D" id="1.10.150.20">
    <property type="entry name" value="5' to 3' exonuclease, C-terminal subdomain"/>
    <property type="match status" value="1"/>
</dbReference>
<dbReference type="Gene3D" id="2.170.120.12">
    <property type="entry name" value="DNA-directed RNA polymerase, insert domain"/>
    <property type="match status" value="1"/>
</dbReference>
<dbReference type="Gene3D" id="3.30.1360.10">
    <property type="entry name" value="RNA polymerase, RBP11-like subunit"/>
    <property type="match status" value="1"/>
</dbReference>
<dbReference type="HAMAP" id="MF_00059">
    <property type="entry name" value="RNApol_bact_RpoA"/>
    <property type="match status" value="1"/>
</dbReference>
<dbReference type="InterPro" id="IPR011262">
    <property type="entry name" value="DNA-dir_RNA_pol_insert"/>
</dbReference>
<dbReference type="InterPro" id="IPR011263">
    <property type="entry name" value="DNA-dir_RNA_pol_RpoA/D/Rpb3"/>
</dbReference>
<dbReference type="InterPro" id="IPR011773">
    <property type="entry name" value="DNA-dir_RpoA"/>
</dbReference>
<dbReference type="InterPro" id="IPR036603">
    <property type="entry name" value="RBP11-like"/>
</dbReference>
<dbReference type="InterPro" id="IPR011260">
    <property type="entry name" value="RNAP_asu_C"/>
</dbReference>
<dbReference type="InterPro" id="IPR036643">
    <property type="entry name" value="RNApol_insert_sf"/>
</dbReference>
<dbReference type="NCBIfam" id="NF003513">
    <property type="entry name" value="PRK05182.1-2"/>
    <property type="match status" value="1"/>
</dbReference>
<dbReference type="NCBIfam" id="NF003519">
    <property type="entry name" value="PRK05182.2-5"/>
    <property type="match status" value="1"/>
</dbReference>
<dbReference type="NCBIfam" id="TIGR02027">
    <property type="entry name" value="rpoA"/>
    <property type="match status" value="1"/>
</dbReference>
<dbReference type="Pfam" id="PF01000">
    <property type="entry name" value="RNA_pol_A_bac"/>
    <property type="match status" value="1"/>
</dbReference>
<dbReference type="Pfam" id="PF03118">
    <property type="entry name" value="RNA_pol_A_CTD"/>
    <property type="match status" value="1"/>
</dbReference>
<dbReference type="Pfam" id="PF01193">
    <property type="entry name" value="RNA_pol_L"/>
    <property type="match status" value="1"/>
</dbReference>
<dbReference type="SMART" id="SM00662">
    <property type="entry name" value="RPOLD"/>
    <property type="match status" value="1"/>
</dbReference>
<dbReference type="SUPFAM" id="SSF47789">
    <property type="entry name" value="C-terminal domain of RNA polymerase alpha subunit"/>
    <property type="match status" value="1"/>
</dbReference>
<dbReference type="SUPFAM" id="SSF56553">
    <property type="entry name" value="Insert subdomain of RNA polymerase alpha subunit"/>
    <property type="match status" value="1"/>
</dbReference>
<dbReference type="SUPFAM" id="SSF55257">
    <property type="entry name" value="RBP11-like subunits of RNA polymerase"/>
    <property type="match status" value="1"/>
</dbReference>
<feature type="chain" id="PRO_0000225298" description="DNA-directed RNA polymerase subunit alpha">
    <location>
        <begin position="1"/>
        <end position="340"/>
    </location>
</feature>
<feature type="region of interest" description="Alpha N-terminal domain (alpha-NTD)" evidence="1">
    <location>
        <begin position="1"/>
        <end position="236"/>
    </location>
</feature>
<feature type="region of interest" description="Alpha C-terminal domain (alpha-CTD)" evidence="1">
    <location>
        <begin position="246"/>
        <end position="340"/>
    </location>
</feature>
<evidence type="ECO:0000255" key="1">
    <source>
        <dbReference type="HAMAP-Rule" id="MF_00059"/>
    </source>
</evidence>
<reference key="1">
    <citation type="journal article" date="2005" name="PLoS Biol.">
        <title>The genome sequence of Rickettsia felis identifies the first putative conjugative plasmid in an obligate intracellular parasite.</title>
        <authorList>
            <person name="Ogata H."/>
            <person name="Renesto P."/>
            <person name="Audic S."/>
            <person name="Robert C."/>
            <person name="Blanc G."/>
            <person name="Fournier P.-E."/>
            <person name="Parinello H."/>
            <person name="Claverie J.-M."/>
            <person name="Raoult D."/>
        </authorList>
    </citation>
    <scope>NUCLEOTIDE SEQUENCE [LARGE SCALE GENOMIC DNA]</scope>
    <source>
        <strain>ATCC VR-1525 / URRWXCal2</strain>
    </source>
</reference>